<organism>
    <name type="scientific">Geobacillus stearothermophilus</name>
    <name type="common">Bacillus stearothermophilus</name>
    <dbReference type="NCBI Taxonomy" id="1422"/>
    <lineage>
        <taxon>Bacteria</taxon>
        <taxon>Bacillati</taxon>
        <taxon>Bacillota</taxon>
        <taxon>Bacilli</taxon>
        <taxon>Bacillales</taxon>
        <taxon>Anoxybacillaceae</taxon>
        <taxon>Geobacillus</taxon>
    </lineage>
</organism>
<keyword id="KW-0002">3D-structure</keyword>
<keyword id="KW-0315">Glutamine amidotransferase</keyword>
<keyword id="KW-0378">Hydrolase</keyword>
<keyword id="KW-0456">Lyase</keyword>
<keyword id="KW-0663">Pyridoxal phosphate</keyword>
<name>PDXT_GEOSE</name>
<accession>P83813</accession>
<gene>
    <name evidence="1" type="primary">pdxT</name>
</gene>
<sequence>MKIGVLGLQGAVREHVRAIEACGAEAVIVKKSEQLEGLDGLVLPGGESTTXRRLIDRYGLXEPLKQFAAAGKPXFGTCAGLILLAKRIVGYDEPHLGLXDITVERNSFGRQRESFEAELSIKGVGDGFVGVFIRAPHIVEAGDGVDVLATYNDRIVAARQGQFLGCSFHPELTDDHRLXQYFLNXVKEAKXASSLK</sequence>
<protein>
    <recommendedName>
        <fullName evidence="1">Pyridoxal 5'-phosphate synthase subunit PdxT</fullName>
        <ecNumber evidence="1">4.3.3.6</ecNumber>
    </recommendedName>
    <alternativeName>
        <fullName evidence="1">Pdx2</fullName>
    </alternativeName>
    <alternativeName>
        <fullName evidence="1">Pyridoxal 5'-phosphate synthase glutaminase subunit</fullName>
        <ecNumber evidence="1">3.5.1.2</ecNumber>
    </alternativeName>
</protein>
<dbReference type="EC" id="4.3.3.6" evidence="1"/>
<dbReference type="EC" id="3.5.1.2" evidence="1"/>
<dbReference type="PDB" id="1Q7R">
    <property type="method" value="X-ray"/>
    <property type="resolution" value="1.90 A"/>
    <property type="chains" value="A=1-196"/>
</dbReference>
<dbReference type="PDBsum" id="1Q7R"/>
<dbReference type="SMR" id="P83813"/>
<dbReference type="UniPathway" id="UPA00245"/>
<dbReference type="EvolutionaryTrace" id="P83813"/>
<dbReference type="GO" id="GO:0005829">
    <property type="term" value="C:cytosol"/>
    <property type="evidence" value="ECO:0007669"/>
    <property type="project" value="TreeGrafter"/>
</dbReference>
<dbReference type="GO" id="GO:1903600">
    <property type="term" value="C:glutaminase complex"/>
    <property type="evidence" value="ECO:0007669"/>
    <property type="project" value="TreeGrafter"/>
</dbReference>
<dbReference type="GO" id="GO:0004359">
    <property type="term" value="F:glutaminase activity"/>
    <property type="evidence" value="ECO:0007669"/>
    <property type="project" value="UniProtKB-UniRule"/>
</dbReference>
<dbReference type="GO" id="GO:0036381">
    <property type="term" value="F:pyridoxal 5'-phosphate synthase (glutamine hydrolysing) activity"/>
    <property type="evidence" value="ECO:0007669"/>
    <property type="project" value="UniProtKB-UniRule"/>
</dbReference>
<dbReference type="GO" id="GO:0006543">
    <property type="term" value="P:glutamine catabolic process"/>
    <property type="evidence" value="ECO:0007669"/>
    <property type="project" value="UniProtKB-UniRule"/>
</dbReference>
<dbReference type="GO" id="GO:0042823">
    <property type="term" value="P:pyridoxal phosphate biosynthetic process"/>
    <property type="evidence" value="ECO:0007669"/>
    <property type="project" value="UniProtKB-UniRule"/>
</dbReference>
<dbReference type="GO" id="GO:0008614">
    <property type="term" value="P:pyridoxine metabolic process"/>
    <property type="evidence" value="ECO:0007669"/>
    <property type="project" value="TreeGrafter"/>
</dbReference>
<dbReference type="CDD" id="cd01749">
    <property type="entry name" value="GATase1_PB"/>
    <property type="match status" value="1"/>
</dbReference>
<dbReference type="FunFam" id="3.40.50.880:FF:000010">
    <property type="entry name" value="uncharacterized protein LOC100176842 isoform X2"/>
    <property type="match status" value="1"/>
</dbReference>
<dbReference type="Gene3D" id="3.40.50.880">
    <property type="match status" value="1"/>
</dbReference>
<dbReference type="HAMAP" id="MF_01615">
    <property type="entry name" value="PdxT"/>
    <property type="match status" value="1"/>
</dbReference>
<dbReference type="InterPro" id="IPR029062">
    <property type="entry name" value="Class_I_gatase-like"/>
</dbReference>
<dbReference type="InterPro" id="IPR002161">
    <property type="entry name" value="PdxT/SNO"/>
</dbReference>
<dbReference type="InterPro" id="IPR021196">
    <property type="entry name" value="PdxT/SNO_CS"/>
</dbReference>
<dbReference type="NCBIfam" id="TIGR03800">
    <property type="entry name" value="PLP_synth_Pdx2"/>
    <property type="match status" value="1"/>
</dbReference>
<dbReference type="PANTHER" id="PTHR31559">
    <property type="entry name" value="PYRIDOXAL 5'-PHOSPHATE SYNTHASE SUBUNIT SNO"/>
    <property type="match status" value="1"/>
</dbReference>
<dbReference type="PANTHER" id="PTHR31559:SF0">
    <property type="entry name" value="PYRIDOXAL 5'-PHOSPHATE SYNTHASE SUBUNIT SNO1-RELATED"/>
    <property type="match status" value="1"/>
</dbReference>
<dbReference type="Pfam" id="PF01174">
    <property type="entry name" value="SNO"/>
    <property type="match status" value="1"/>
</dbReference>
<dbReference type="PIRSF" id="PIRSF005639">
    <property type="entry name" value="Glut_amidoT_SNO"/>
    <property type="match status" value="1"/>
</dbReference>
<dbReference type="SUPFAM" id="SSF52317">
    <property type="entry name" value="Class I glutamine amidotransferase-like"/>
    <property type="match status" value="1"/>
</dbReference>
<dbReference type="PROSITE" id="PS01236">
    <property type="entry name" value="PDXT_SNO_1"/>
    <property type="match status" value="1"/>
</dbReference>
<dbReference type="PROSITE" id="PS51130">
    <property type="entry name" value="PDXT_SNO_2"/>
    <property type="match status" value="1"/>
</dbReference>
<comment type="function">
    <text evidence="1">Catalyzes the hydrolysis of glutamine to glutamate and ammonia as part of the biosynthesis of pyridoxal 5'-phosphate. The resulting ammonia molecule is channeled to the active site of PdxS.</text>
</comment>
<comment type="catalytic activity">
    <reaction evidence="1">
        <text>aldehydo-D-ribose 5-phosphate + D-glyceraldehyde 3-phosphate + L-glutamine = pyridoxal 5'-phosphate + L-glutamate + phosphate + 3 H2O + H(+)</text>
        <dbReference type="Rhea" id="RHEA:31507"/>
        <dbReference type="ChEBI" id="CHEBI:15377"/>
        <dbReference type="ChEBI" id="CHEBI:15378"/>
        <dbReference type="ChEBI" id="CHEBI:29985"/>
        <dbReference type="ChEBI" id="CHEBI:43474"/>
        <dbReference type="ChEBI" id="CHEBI:58273"/>
        <dbReference type="ChEBI" id="CHEBI:58359"/>
        <dbReference type="ChEBI" id="CHEBI:59776"/>
        <dbReference type="ChEBI" id="CHEBI:597326"/>
        <dbReference type="EC" id="4.3.3.6"/>
    </reaction>
</comment>
<comment type="catalytic activity">
    <reaction evidence="1">
        <text>L-glutamine + H2O = L-glutamate + NH4(+)</text>
        <dbReference type="Rhea" id="RHEA:15889"/>
        <dbReference type="ChEBI" id="CHEBI:15377"/>
        <dbReference type="ChEBI" id="CHEBI:28938"/>
        <dbReference type="ChEBI" id="CHEBI:29985"/>
        <dbReference type="ChEBI" id="CHEBI:58359"/>
        <dbReference type="EC" id="3.5.1.2"/>
    </reaction>
</comment>
<comment type="pathway">
    <text evidence="1">Cofactor biosynthesis; pyridoxal 5'-phosphate biosynthesis.</text>
</comment>
<comment type="subunit">
    <text evidence="1">In the presence of PdxS, forms a dodecamer of heterodimers. Only shows activity in the heterodimer.</text>
</comment>
<comment type="similarity">
    <text evidence="1">Belongs to the glutaminase PdxT/SNO family.</text>
</comment>
<comment type="caution">
    <text evidence="2">The sequence shown here has been extracted from PDB entry 1Q7R.</text>
</comment>
<proteinExistence type="evidence at protein level"/>
<reference key="1">
    <citation type="submission" date="2003-08" db="PDB data bank">
        <title>X-ray structure analysis of a predicted amidotransferase from B.stearothermophilus at 1.9 A resolution.</title>
        <authorList>
            <person name="Miller D.J."/>
            <person name="Anderson W.F."/>
        </authorList>
    </citation>
    <scope>X-RAY CRYSTALLOGRAPHY (1.9 ANGSTROMS)</scope>
</reference>
<evidence type="ECO:0000255" key="1">
    <source>
        <dbReference type="HAMAP-Rule" id="MF_01615"/>
    </source>
</evidence>
<evidence type="ECO:0000305" key="2"/>
<evidence type="ECO:0007829" key="3">
    <source>
        <dbReference type="PDB" id="1Q7R"/>
    </source>
</evidence>
<feature type="chain" id="PRO_0000135631" description="Pyridoxal 5'-phosphate synthase subunit PdxT">
    <location>
        <begin position="1"/>
        <end position="196"/>
    </location>
</feature>
<feature type="active site" description="Nucleophile" evidence="1">
    <location>
        <position position="78"/>
    </location>
</feature>
<feature type="active site" description="Charge relay system" evidence="1">
    <location>
        <position position="169"/>
    </location>
</feature>
<feature type="active site" description="Charge relay system" evidence="1">
    <location>
        <position position="171"/>
    </location>
</feature>
<feature type="binding site" evidence="1">
    <location>
        <begin position="46"/>
        <end position="48"/>
    </location>
    <ligand>
        <name>L-glutamine</name>
        <dbReference type="ChEBI" id="CHEBI:58359"/>
    </ligand>
</feature>
<feature type="binding site" evidence="1">
    <location>
        <position position="105"/>
    </location>
    <ligand>
        <name>L-glutamine</name>
        <dbReference type="ChEBI" id="CHEBI:58359"/>
    </ligand>
</feature>
<feature type="binding site" evidence="1">
    <location>
        <begin position="133"/>
        <end position="134"/>
    </location>
    <ligand>
        <name>L-glutamine</name>
        <dbReference type="ChEBI" id="CHEBI:58359"/>
    </ligand>
</feature>
<feature type="strand" evidence="3">
    <location>
        <begin position="2"/>
        <end position="7"/>
    </location>
</feature>
<feature type="helix" evidence="3">
    <location>
        <begin position="9"/>
        <end position="11"/>
    </location>
</feature>
<feature type="helix" evidence="3">
    <location>
        <begin position="13"/>
        <end position="21"/>
    </location>
</feature>
<feature type="strand" evidence="3">
    <location>
        <begin position="25"/>
        <end position="29"/>
    </location>
</feature>
<feature type="helix" evidence="3">
    <location>
        <begin position="32"/>
        <end position="35"/>
    </location>
</feature>
<feature type="strand" evidence="3">
    <location>
        <begin position="39"/>
        <end position="43"/>
    </location>
</feature>
<feature type="helix" evidence="3">
    <location>
        <begin position="48"/>
        <end position="57"/>
    </location>
</feature>
<feature type="helix" evidence="3">
    <location>
        <begin position="61"/>
        <end position="69"/>
    </location>
</feature>
<feature type="strand" evidence="3">
    <location>
        <begin position="74"/>
        <end position="77"/>
    </location>
</feature>
<feature type="helix" evidence="3">
    <location>
        <begin position="80"/>
        <end position="84"/>
    </location>
</feature>
<feature type="strand" evidence="3">
    <location>
        <begin position="85"/>
        <end position="91"/>
    </location>
</feature>
<feature type="strand" evidence="3">
    <location>
        <begin position="99"/>
        <end position="104"/>
    </location>
</feature>
<feature type="helix" evidence="3">
    <location>
        <begin position="106"/>
        <end position="109"/>
    </location>
</feature>
<feature type="strand" evidence="3">
    <location>
        <begin position="115"/>
        <end position="121"/>
    </location>
</feature>
<feature type="turn" evidence="3">
    <location>
        <begin position="122"/>
        <end position="124"/>
    </location>
</feature>
<feature type="strand" evidence="3">
    <location>
        <begin position="125"/>
        <end position="134"/>
    </location>
</feature>
<feature type="strand" evidence="3">
    <location>
        <begin position="137"/>
        <end position="141"/>
    </location>
</feature>
<feature type="strand" evidence="3">
    <location>
        <begin position="146"/>
        <end position="151"/>
    </location>
</feature>
<feature type="strand" evidence="3">
    <location>
        <begin position="154"/>
        <end position="160"/>
    </location>
</feature>
<feature type="strand" evidence="3">
    <location>
        <begin position="163"/>
        <end position="168"/>
    </location>
</feature>
<feature type="helix" evidence="3">
    <location>
        <begin position="170"/>
        <end position="172"/>
    </location>
</feature>
<feature type="helix" evidence="3">
    <location>
        <begin position="177"/>
        <end position="195"/>
    </location>
</feature>